<reference key="1">
    <citation type="submission" date="2006-12" db="EMBL/GenBank/DDBJ databases">
        <title>Complete sequence of Shewanella amazonensis SB2B.</title>
        <authorList>
            <consortium name="US DOE Joint Genome Institute"/>
            <person name="Copeland A."/>
            <person name="Lucas S."/>
            <person name="Lapidus A."/>
            <person name="Barry K."/>
            <person name="Detter J.C."/>
            <person name="Glavina del Rio T."/>
            <person name="Hammon N."/>
            <person name="Israni S."/>
            <person name="Dalin E."/>
            <person name="Tice H."/>
            <person name="Pitluck S."/>
            <person name="Munk A.C."/>
            <person name="Brettin T."/>
            <person name="Bruce D."/>
            <person name="Han C."/>
            <person name="Tapia R."/>
            <person name="Gilna P."/>
            <person name="Schmutz J."/>
            <person name="Larimer F."/>
            <person name="Land M."/>
            <person name="Hauser L."/>
            <person name="Kyrpides N."/>
            <person name="Mikhailova N."/>
            <person name="Fredrickson J."/>
            <person name="Richardson P."/>
        </authorList>
    </citation>
    <scope>NUCLEOTIDE SEQUENCE [LARGE SCALE GENOMIC DNA]</scope>
    <source>
        <strain>ATCC BAA-1098 / SB2B</strain>
    </source>
</reference>
<dbReference type="EC" id="6.2.1.1" evidence="1"/>
<dbReference type="EMBL" id="CP000507">
    <property type="protein sequence ID" value="ABM00285.1"/>
    <property type="molecule type" value="Genomic_DNA"/>
</dbReference>
<dbReference type="RefSeq" id="WP_011760192.1">
    <property type="nucleotide sequence ID" value="NC_008700.1"/>
</dbReference>
<dbReference type="SMR" id="A1S7C8"/>
<dbReference type="STRING" id="326297.Sama_2079"/>
<dbReference type="KEGG" id="saz:Sama_2079"/>
<dbReference type="eggNOG" id="COG0365">
    <property type="taxonomic scope" value="Bacteria"/>
</dbReference>
<dbReference type="HOGENOM" id="CLU_000022_3_6_6"/>
<dbReference type="OrthoDB" id="9803968at2"/>
<dbReference type="Proteomes" id="UP000009175">
    <property type="component" value="Chromosome"/>
</dbReference>
<dbReference type="GO" id="GO:0005829">
    <property type="term" value="C:cytosol"/>
    <property type="evidence" value="ECO:0007669"/>
    <property type="project" value="TreeGrafter"/>
</dbReference>
<dbReference type="GO" id="GO:0003987">
    <property type="term" value="F:acetate-CoA ligase activity"/>
    <property type="evidence" value="ECO:0007669"/>
    <property type="project" value="UniProtKB-UniRule"/>
</dbReference>
<dbReference type="GO" id="GO:0016208">
    <property type="term" value="F:AMP binding"/>
    <property type="evidence" value="ECO:0007669"/>
    <property type="project" value="InterPro"/>
</dbReference>
<dbReference type="GO" id="GO:0005524">
    <property type="term" value="F:ATP binding"/>
    <property type="evidence" value="ECO:0007669"/>
    <property type="project" value="UniProtKB-KW"/>
</dbReference>
<dbReference type="GO" id="GO:0046872">
    <property type="term" value="F:metal ion binding"/>
    <property type="evidence" value="ECO:0007669"/>
    <property type="project" value="UniProtKB-KW"/>
</dbReference>
<dbReference type="GO" id="GO:0019427">
    <property type="term" value="P:acetyl-CoA biosynthetic process from acetate"/>
    <property type="evidence" value="ECO:0007669"/>
    <property type="project" value="InterPro"/>
</dbReference>
<dbReference type="CDD" id="cd05966">
    <property type="entry name" value="ACS"/>
    <property type="match status" value="1"/>
</dbReference>
<dbReference type="FunFam" id="3.30.300.30:FF:000004">
    <property type="entry name" value="Acetyl-coenzyme A synthetase"/>
    <property type="match status" value="1"/>
</dbReference>
<dbReference type="FunFam" id="3.40.50.12780:FF:000001">
    <property type="entry name" value="Acetyl-coenzyme A synthetase"/>
    <property type="match status" value="1"/>
</dbReference>
<dbReference type="Gene3D" id="3.30.300.30">
    <property type="match status" value="1"/>
</dbReference>
<dbReference type="Gene3D" id="3.40.50.12780">
    <property type="entry name" value="N-terminal domain of ligase-like"/>
    <property type="match status" value="1"/>
</dbReference>
<dbReference type="HAMAP" id="MF_01123">
    <property type="entry name" value="Ac_CoA_synth"/>
    <property type="match status" value="1"/>
</dbReference>
<dbReference type="InterPro" id="IPR011904">
    <property type="entry name" value="Ac_CoA_lig"/>
</dbReference>
<dbReference type="InterPro" id="IPR032387">
    <property type="entry name" value="ACAS_N"/>
</dbReference>
<dbReference type="InterPro" id="IPR025110">
    <property type="entry name" value="AMP-bd_C"/>
</dbReference>
<dbReference type="InterPro" id="IPR045851">
    <property type="entry name" value="AMP-bd_C_sf"/>
</dbReference>
<dbReference type="InterPro" id="IPR020845">
    <property type="entry name" value="AMP-binding_CS"/>
</dbReference>
<dbReference type="InterPro" id="IPR000873">
    <property type="entry name" value="AMP-dep_synth/lig_dom"/>
</dbReference>
<dbReference type="InterPro" id="IPR042099">
    <property type="entry name" value="ANL_N_sf"/>
</dbReference>
<dbReference type="NCBIfam" id="TIGR02188">
    <property type="entry name" value="Ac_CoA_lig_AcsA"/>
    <property type="match status" value="1"/>
</dbReference>
<dbReference type="NCBIfam" id="NF001208">
    <property type="entry name" value="PRK00174.1"/>
    <property type="match status" value="1"/>
</dbReference>
<dbReference type="PANTHER" id="PTHR24095">
    <property type="entry name" value="ACETYL-COENZYME A SYNTHETASE"/>
    <property type="match status" value="1"/>
</dbReference>
<dbReference type="PANTHER" id="PTHR24095:SF243">
    <property type="entry name" value="ACETYL-COENZYME A SYNTHETASE"/>
    <property type="match status" value="1"/>
</dbReference>
<dbReference type="Pfam" id="PF16177">
    <property type="entry name" value="ACAS_N"/>
    <property type="match status" value="1"/>
</dbReference>
<dbReference type="Pfam" id="PF00501">
    <property type="entry name" value="AMP-binding"/>
    <property type="match status" value="1"/>
</dbReference>
<dbReference type="Pfam" id="PF13193">
    <property type="entry name" value="AMP-binding_C"/>
    <property type="match status" value="1"/>
</dbReference>
<dbReference type="SUPFAM" id="SSF56801">
    <property type="entry name" value="Acetyl-CoA synthetase-like"/>
    <property type="match status" value="1"/>
</dbReference>
<dbReference type="PROSITE" id="PS00455">
    <property type="entry name" value="AMP_BINDING"/>
    <property type="match status" value="1"/>
</dbReference>
<evidence type="ECO:0000255" key="1">
    <source>
        <dbReference type="HAMAP-Rule" id="MF_01123"/>
    </source>
</evidence>
<accession>A1S7C8</accession>
<feature type="chain" id="PRO_1000065315" description="Acetyl-coenzyme A synthetase">
    <location>
        <begin position="1"/>
        <end position="650"/>
    </location>
</feature>
<feature type="binding site" evidence="1">
    <location>
        <begin position="191"/>
        <end position="194"/>
    </location>
    <ligand>
        <name>CoA</name>
        <dbReference type="ChEBI" id="CHEBI:57287"/>
    </ligand>
</feature>
<feature type="binding site" evidence="1">
    <location>
        <position position="311"/>
    </location>
    <ligand>
        <name>CoA</name>
        <dbReference type="ChEBI" id="CHEBI:57287"/>
    </ligand>
</feature>
<feature type="binding site" evidence="1">
    <location>
        <position position="335"/>
    </location>
    <ligand>
        <name>CoA</name>
        <dbReference type="ChEBI" id="CHEBI:57287"/>
    </ligand>
</feature>
<feature type="binding site" evidence="1">
    <location>
        <begin position="387"/>
        <end position="389"/>
    </location>
    <ligand>
        <name>ATP</name>
        <dbReference type="ChEBI" id="CHEBI:30616"/>
    </ligand>
</feature>
<feature type="binding site" evidence="1">
    <location>
        <begin position="411"/>
        <end position="416"/>
    </location>
    <ligand>
        <name>ATP</name>
        <dbReference type="ChEBI" id="CHEBI:30616"/>
    </ligand>
</feature>
<feature type="binding site" evidence="1">
    <location>
        <position position="500"/>
    </location>
    <ligand>
        <name>ATP</name>
        <dbReference type="ChEBI" id="CHEBI:30616"/>
    </ligand>
</feature>
<feature type="binding site" evidence="1">
    <location>
        <position position="515"/>
    </location>
    <ligand>
        <name>ATP</name>
        <dbReference type="ChEBI" id="CHEBI:30616"/>
    </ligand>
</feature>
<feature type="binding site" evidence="1">
    <location>
        <position position="523"/>
    </location>
    <ligand>
        <name>CoA</name>
        <dbReference type="ChEBI" id="CHEBI:57287"/>
    </ligand>
</feature>
<feature type="binding site" evidence="1">
    <location>
        <position position="526"/>
    </location>
    <ligand>
        <name>ATP</name>
        <dbReference type="ChEBI" id="CHEBI:30616"/>
    </ligand>
</feature>
<feature type="binding site" evidence="1">
    <location>
        <position position="537"/>
    </location>
    <ligand>
        <name>Mg(2+)</name>
        <dbReference type="ChEBI" id="CHEBI:18420"/>
    </ligand>
</feature>
<feature type="binding site" evidence="1">
    <location>
        <position position="539"/>
    </location>
    <ligand>
        <name>Mg(2+)</name>
        <dbReference type="ChEBI" id="CHEBI:18420"/>
    </ligand>
</feature>
<feature type="binding site" evidence="1">
    <location>
        <position position="542"/>
    </location>
    <ligand>
        <name>Mg(2+)</name>
        <dbReference type="ChEBI" id="CHEBI:18420"/>
    </ligand>
</feature>
<feature type="binding site" evidence="1">
    <location>
        <position position="584"/>
    </location>
    <ligand>
        <name>CoA</name>
        <dbReference type="ChEBI" id="CHEBI:57287"/>
    </ligand>
</feature>
<feature type="modified residue" description="N6-acetyllysine" evidence="1">
    <location>
        <position position="609"/>
    </location>
</feature>
<name>ACSA_SHEAM</name>
<gene>
    <name evidence="1" type="primary">acsA</name>
    <name type="ordered locus">Sama_2079</name>
</gene>
<organism>
    <name type="scientific">Shewanella amazonensis (strain ATCC BAA-1098 / SB2B)</name>
    <dbReference type="NCBI Taxonomy" id="326297"/>
    <lineage>
        <taxon>Bacteria</taxon>
        <taxon>Pseudomonadati</taxon>
        <taxon>Pseudomonadota</taxon>
        <taxon>Gammaproteobacteria</taxon>
        <taxon>Alteromonadales</taxon>
        <taxon>Shewanellaceae</taxon>
        <taxon>Shewanella</taxon>
    </lineage>
</organism>
<protein>
    <recommendedName>
        <fullName evidence="1">Acetyl-coenzyme A synthetase</fullName>
        <shortName evidence="1">AcCoA synthetase</shortName>
        <shortName evidence="1">Acs</shortName>
        <ecNumber evidence="1">6.2.1.1</ecNumber>
    </recommendedName>
    <alternativeName>
        <fullName evidence="1">Acetate--CoA ligase</fullName>
    </alternativeName>
    <alternativeName>
        <fullName evidence="1">Acyl-activating enzyme</fullName>
    </alternativeName>
</protein>
<proteinExistence type="inferred from homology"/>
<sequence>MSTQSLYSVPADIAANALVNNEQYQKMYQESVANPEGFWGEHAKRIDWIKPFTQVKDTSYDDQNLYIKWFHDGTLNASANCLDRHLASKGDDVAIIWEGDDASEQRKVTYRELHAEVCQFANALKAEGVKRGDVVTIYMPMVVEATVAMLACARIGAVHSVVFGGFSPDSIASRVIDGKSKLLITADEGVRGGRKIPLKGNIDEALNRPDVTTVETVIVLKRTGGAVNWVEGRDKWWHQVTDGAATECAVEEMGAEDPLFLLYTSGSTGNPKGVLHTTGGYLVYASMTHEYVFDYKPGEVYWCTADVGWITGHSYMVYGPLANGATILIHEGIPNFPSPARLGEIVDRHQVNILYTAPTLIRALMAEGKQHFDNFDGKSLRIMGSVGEPINPEAWRWYHEVIGHEHCPIVDTWWQTETGGILITPLPGATDTKPGSATRPFFGVQPALVDNEGNILEGATEGNLVLLDSWPGQMRTVYGDHERFVLTYFKTFRGMYFTGDGARRDEDGYYWITGRVDDVINVSGHRLGTAEVESALVAHDLVAEAAVVGYPHDIKGQGIYAYVTLTKGTEATEELRQELRQWVRKEIGALATPDLIQWASGLPKTRSGKIMRRFLRKIAANEITNLGDASTLADPSVIDTLIESRLNRAD</sequence>
<keyword id="KW-0007">Acetylation</keyword>
<keyword id="KW-0067">ATP-binding</keyword>
<keyword id="KW-0436">Ligase</keyword>
<keyword id="KW-0460">Magnesium</keyword>
<keyword id="KW-0479">Metal-binding</keyword>
<keyword id="KW-0547">Nucleotide-binding</keyword>
<keyword id="KW-1185">Reference proteome</keyword>
<comment type="function">
    <text evidence="1">Catalyzes the conversion of acetate into acetyl-CoA (AcCoA), an essential intermediate at the junction of anabolic and catabolic pathways. AcsA undergoes a two-step reaction. In the first half reaction, AcsA combines acetate with ATP to form acetyl-adenylate (AcAMP) intermediate. In the second half reaction, it can then transfer the acetyl group from AcAMP to the sulfhydryl group of CoA, forming the product AcCoA.</text>
</comment>
<comment type="catalytic activity">
    <reaction evidence="1">
        <text>acetate + ATP + CoA = acetyl-CoA + AMP + diphosphate</text>
        <dbReference type="Rhea" id="RHEA:23176"/>
        <dbReference type="ChEBI" id="CHEBI:30089"/>
        <dbReference type="ChEBI" id="CHEBI:30616"/>
        <dbReference type="ChEBI" id="CHEBI:33019"/>
        <dbReference type="ChEBI" id="CHEBI:57287"/>
        <dbReference type="ChEBI" id="CHEBI:57288"/>
        <dbReference type="ChEBI" id="CHEBI:456215"/>
        <dbReference type="EC" id="6.2.1.1"/>
    </reaction>
</comment>
<comment type="cofactor">
    <cofactor evidence="1">
        <name>Mg(2+)</name>
        <dbReference type="ChEBI" id="CHEBI:18420"/>
    </cofactor>
</comment>
<comment type="PTM">
    <text evidence="1">Acetylated. Deacetylation by the SIR2-homolog deacetylase activates the enzyme.</text>
</comment>
<comment type="similarity">
    <text evidence="1">Belongs to the ATP-dependent AMP-binding enzyme family.</text>
</comment>